<organism>
    <name type="scientific">Ethmostigmus rubripes</name>
    <name type="common">Giant centipede</name>
    <dbReference type="NCBI Taxonomy" id="62613"/>
    <lineage>
        <taxon>Eukaryota</taxon>
        <taxon>Metazoa</taxon>
        <taxon>Ecdysozoa</taxon>
        <taxon>Arthropoda</taxon>
        <taxon>Myriapoda</taxon>
        <taxon>Chilopoda</taxon>
        <taxon>Pleurostigmophora</taxon>
        <taxon>Scolopendromorpha</taxon>
        <taxon>Scolopendridae</taxon>
        <taxon>Ethmostigmus</taxon>
    </lineage>
</organism>
<feature type="signal peptide" evidence="1">
    <location>
        <begin position="1"/>
        <end position="20"/>
    </location>
</feature>
<feature type="chain" id="PRO_0000446693" description="U-scoloptoxin(02)-Er1a" evidence="4">
    <location>
        <begin position="21"/>
        <end position="68"/>
    </location>
</feature>
<feature type="disulfide bond" evidence="2">
    <location>
        <begin position="30"/>
        <end position="52"/>
    </location>
</feature>
<feature type="disulfide bond" evidence="2">
    <location>
        <begin position="38"/>
        <end position="58"/>
    </location>
</feature>
<feature type="disulfide bond" evidence="2">
    <location>
        <begin position="42"/>
        <end position="60"/>
    </location>
</feature>
<accession>P0DPW6</accession>
<proteinExistence type="inferred from homology"/>
<sequence>MIVSLRCCLLLVALLITVETAIMSKRDIVCSVSGDVACNLECELLHKKKGSCDENGACTCFNKKRETE</sequence>
<keyword id="KW-0044">Antibiotic</keyword>
<keyword id="KW-0929">Antimicrobial</keyword>
<keyword id="KW-0211">Defensin</keyword>
<keyword id="KW-1015">Disulfide bond</keyword>
<keyword id="KW-0964">Secreted</keyword>
<keyword id="KW-0732">Signal</keyword>
<dbReference type="SMR" id="P0DPW6"/>
<dbReference type="GO" id="GO:0005576">
    <property type="term" value="C:extracellular region"/>
    <property type="evidence" value="ECO:0007669"/>
    <property type="project" value="UniProtKB-SubCell"/>
</dbReference>
<dbReference type="GO" id="GO:0042742">
    <property type="term" value="P:defense response to bacterium"/>
    <property type="evidence" value="ECO:0007669"/>
    <property type="project" value="UniProtKB-KW"/>
</dbReference>
<protein>
    <recommendedName>
        <fullName evidence="3">U-scoloptoxin(02)-Er1a</fullName>
        <shortName evidence="3">U-SLPTX(02)-Er1a</shortName>
    </recommendedName>
</protein>
<comment type="function">
    <text evidence="2">Antibacterial peptide mostly active against Gram-positive bacteria.</text>
</comment>
<comment type="subcellular location">
    <subcellularLocation>
        <location evidence="5">Secreted</location>
    </subcellularLocation>
</comment>
<comment type="tissue specificity">
    <text evidence="5">Expressed by the venom gland.</text>
</comment>
<comment type="miscellaneous">
    <text evidence="4">This toxin has also been classified in the scoloptoxin-02 family.</text>
</comment>
<comment type="similarity">
    <text evidence="2">Belongs to the invertebrate defensin family.</text>
</comment>
<comment type="caution">
    <text evidence="5">All E.rubripes family members described in 'Undeheim et al., 2014' have not been imported into UniProtKB. Please, refer to this paper to access them.</text>
</comment>
<comment type="online information" name="National Center for Biotechnology Information (NCBI)">
    <link uri="https://www.ncbi.nlm.nih.gov/nuccore/GASI01000163"/>
</comment>
<reference key="1">
    <citation type="journal article" date="2014" name="Mol. Biol. Evol.">
        <title>Clawing through evolution: toxin diversification and convergence in the ancient lineage Chilopoda (centipedes).</title>
        <authorList>
            <person name="Undheim E.A."/>
            <person name="Jones A."/>
            <person name="Clauser K.R."/>
            <person name="Holland J.W."/>
            <person name="Pineda S.S."/>
            <person name="King G.F."/>
            <person name="Fry B.G."/>
        </authorList>
    </citation>
    <scope>NUCLEOTIDE SEQUENCE [MRNA]</scope>
    <scope>NOMENCLATURE</scope>
    <source>
        <tissue>Venom gland</tissue>
    </source>
</reference>
<evidence type="ECO:0000255" key="1"/>
<evidence type="ECO:0000255" key="2">
    <source>
        <dbReference type="PROSITE-ProRule" id="PRU00710"/>
    </source>
</evidence>
<evidence type="ECO:0000303" key="3">
    <source>
    </source>
</evidence>
<evidence type="ECO:0000305" key="4"/>
<evidence type="ECO:0000305" key="5">
    <source>
    </source>
</evidence>
<name>TX21A_ETHRU</name>